<name>KHSE_LACPL</name>
<dbReference type="EC" id="2.7.1.39" evidence="1"/>
<dbReference type="EMBL" id="AL935263">
    <property type="protein sequence ID" value="CCC78058.1"/>
    <property type="molecule type" value="Genomic_DNA"/>
</dbReference>
<dbReference type="RefSeq" id="WP_003640906.1">
    <property type="nucleotide sequence ID" value="NC_004567.2"/>
</dbReference>
<dbReference type="RefSeq" id="YP_004888572.1">
    <property type="nucleotide sequence ID" value="NC_004567.2"/>
</dbReference>
<dbReference type="SMR" id="Q88Z08"/>
<dbReference type="STRING" id="220668.lp_0572"/>
<dbReference type="EnsemblBacteria" id="CCC78058">
    <property type="protein sequence ID" value="CCC78058"/>
    <property type="gene ID" value="lp_0572"/>
</dbReference>
<dbReference type="GeneID" id="89668224"/>
<dbReference type="KEGG" id="lpl:lp_0572"/>
<dbReference type="PATRIC" id="fig|220668.9.peg.476"/>
<dbReference type="eggNOG" id="COG0083">
    <property type="taxonomic scope" value="Bacteria"/>
</dbReference>
<dbReference type="HOGENOM" id="CLU_041243_0_0_9"/>
<dbReference type="OrthoDB" id="9769912at2"/>
<dbReference type="PhylomeDB" id="Q88Z08"/>
<dbReference type="UniPathway" id="UPA00050">
    <property type="reaction ID" value="UER00064"/>
</dbReference>
<dbReference type="Proteomes" id="UP000000432">
    <property type="component" value="Chromosome"/>
</dbReference>
<dbReference type="GO" id="GO:0005737">
    <property type="term" value="C:cytoplasm"/>
    <property type="evidence" value="ECO:0007669"/>
    <property type="project" value="UniProtKB-SubCell"/>
</dbReference>
<dbReference type="GO" id="GO:0005524">
    <property type="term" value="F:ATP binding"/>
    <property type="evidence" value="ECO:0007669"/>
    <property type="project" value="UniProtKB-UniRule"/>
</dbReference>
<dbReference type="GO" id="GO:0004413">
    <property type="term" value="F:homoserine kinase activity"/>
    <property type="evidence" value="ECO:0007669"/>
    <property type="project" value="UniProtKB-UniRule"/>
</dbReference>
<dbReference type="GO" id="GO:0009088">
    <property type="term" value="P:threonine biosynthetic process"/>
    <property type="evidence" value="ECO:0007669"/>
    <property type="project" value="UniProtKB-UniRule"/>
</dbReference>
<dbReference type="Gene3D" id="3.30.230.10">
    <property type="match status" value="1"/>
</dbReference>
<dbReference type="Gene3D" id="3.30.70.890">
    <property type="entry name" value="GHMP kinase, C-terminal domain"/>
    <property type="match status" value="1"/>
</dbReference>
<dbReference type="HAMAP" id="MF_00384">
    <property type="entry name" value="Homoser_kinase"/>
    <property type="match status" value="1"/>
</dbReference>
<dbReference type="InterPro" id="IPR013750">
    <property type="entry name" value="GHMP_kinase_C_dom"/>
</dbReference>
<dbReference type="InterPro" id="IPR036554">
    <property type="entry name" value="GHMP_kinase_C_sf"/>
</dbReference>
<dbReference type="InterPro" id="IPR006204">
    <property type="entry name" value="GHMP_kinase_N_dom"/>
</dbReference>
<dbReference type="InterPro" id="IPR006203">
    <property type="entry name" value="GHMP_knse_ATP-bd_CS"/>
</dbReference>
<dbReference type="InterPro" id="IPR000870">
    <property type="entry name" value="Homoserine_kinase"/>
</dbReference>
<dbReference type="InterPro" id="IPR020568">
    <property type="entry name" value="Ribosomal_Su5_D2-typ_SF"/>
</dbReference>
<dbReference type="InterPro" id="IPR014721">
    <property type="entry name" value="Ribsml_uS5_D2-typ_fold_subgr"/>
</dbReference>
<dbReference type="NCBIfam" id="TIGR00191">
    <property type="entry name" value="thrB"/>
    <property type="match status" value="1"/>
</dbReference>
<dbReference type="PANTHER" id="PTHR20861:SF1">
    <property type="entry name" value="HOMOSERINE KINASE"/>
    <property type="match status" value="1"/>
</dbReference>
<dbReference type="PANTHER" id="PTHR20861">
    <property type="entry name" value="HOMOSERINE/4-DIPHOSPHOCYTIDYL-2-C-METHYL-D-ERYTHRITOL KINASE"/>
    <property type="match status" value="1"/>
</dbReference>
<dbReference type="Pfam" id="PF08544">
    <property type="entry name" value="GHMP_kinases_C"/>
    <property type="match status" value="1"/>
</dbReference>
<dbReference type="Pfam" id="PF00288">
    <property type="entry name" value="GHMP_kinases_N"/>
    <property type="match status" value="1"/>
</dbReference>
<dbReference type="PIRSF" id="PIRSF000676">
    <property type="entry name" value="Homoser_kin"/>
    <property type="match status" value="1"/>
</dbReference>
<dbReference type="PRINTS" id="PR00958">
    <property type="entry name" value="HOMSERKINASE"/>
</dbReference>
<dbReference type="SUPFAM" id="SSF55060">
    <property type="entry name" value="GHMP Kinase, C-terminal domain"/>
    <property type="match status" value="1"/>
</dbReference>
<dbReference type="SUPFAM" id="SSF54211">
    <property type="entry name" value="Ribosomal protein S5 domain 2-like"/>
    <property type="match status" value="1"/>
</dbReference>
<dbReference type="PROSITE" id="PS00627">
    <property type="entry name" value="GHMP_KINASES_ATP"/>
    <property type="match status" value="1"/>
</dbReference>
<comment type="function">
    <text evidence="1">Catalyzes the ATP-dependent phosphorylation of L-homoserine to L-homoserine phosphate.</text>
</comment>
<comment type="catalytic activity">
    <reaction evidence="1">
        <text>L-homoserine + ATP = O-phospho-L-homoserine + ADP + H(+)</text>
        <dbReference type="Rhea" id="RHEA:13985"/>
        <dbReference type="ChEBI" id="CHEBI:15378"/>
        <dbReference type="ChEBI" id="CHEBI:30616"/>
        <dbReference type="ChEBI" id="CHEBI:57476"/>
        <dbReference type="ChEBI" id="CHEBI:57590"/>
        <dbReference type="ChEBI" id="CHEBI:456216"/>
        <dbReference type="EC" id="2.7.1.39"/>
    </reaction>
</comment>
<comment type="pathway">
    <text evidence="1">Amino-acid biosynthesis; L-threonine biosynthesis; L-threonine from L-aspartate: step 4/5.</text>
</comment>
<comment type="subcellular location">
    <subcellularLocation>
        <location evidence="1">Cytoplasm</location>
    </subcellularLocation>
</comment>
<comment type="similarity">
    <text evidence="1">Belongs to the GHMP kinase family. Homoserine kinase subfamily.</text>
</comment>
<feature type="chain" id="PRO_0000156580" description="Homoserine kinase">
    <location>
        <begin position="1"/>
        <end position="291"/>
    </location>
</feature>
<feature type="binding site" evidence="1">
    <location>
        <begin position="80"/>
        <end position="90"/>
    </location>
    <ligand>
        <name>ATP</name>
        <dbReference type="ChEBI" id="CHEBI:30616"/>
    </ligand>
</feature>
<gene>
    <name evidence="1" type="primary">thrB</name>
    <name type="ordered locus">lp_0572</name>
</gene>
<proteinExistence type="inferred from homology"/>
<reference key="1">
    <citation type="journal article" date="2003" name="Proc. Natl. Acad. Sci. U.S.A.">
        <title>Complete genome sequence of Lactobacillus plantarum WCFS1.</title>
        <authorList>
            <person name="Kleerebezem M."/>
            <person name="Boekhorst J."/>
            <person name="van Kranenburg R."/>
            <person name="Molenaar D."/>
            <person name="Kuipers O.P."/>
            <person name="Leer R."/>
            <person name="Tarchini R."/>
            <person name="Peters S.A."/>
            <person name="Sandbrink H.M."/>
            <person name="Fiers M.W.E.J."/>
            <person name="Stiekema W."/>
            <person name="Klein Lankhorst R.M."/>
            <person name="Bron P.A."/>
            <person name="Hoffer S.M."/>
            <person name="Nierop Groot M.N."/>
            <person name="Kerkhoven R."/>
            <person name="De Vries M."/>
            <person name="Ursing B."/>
            <person name="De Vos W.M."/>
            <person name="Siezen R.J."/>
        </authorList>
    </citation>
    <scope>NUCLEOTIDE SEQUENCE [LARGE SCALE GENOMIC DNA]</scope>
    <source>
        <strain>ATCC BAA-793 / NCIMB 8826 / WCFS1</strain>
    </source>
</reference>
<reference key="2">
    <citation type="journal article" date="2012" name="J. Bacteriol.">
        <title>Complete resequencing and reannotation of the Lactobacillus plantarum WCFS1 genome.</title>
        <authorList>
            <person name="Siezen R.J."/>
            <person name="Francke C."/>
            <person name="Renckens B."/>
            <person name="Boekhorst J."/>
            <person name="Wels M."/>
            <person name="Kleerebezem M."/>
            <person name="van Hijum S.A."/>
        </authorList>
    </citation>
    <scope>NUCLEOTIDE SEQUENCE [LARGE SCALE GENOMIC DNA]</scope>
    <scope>GENOME REANNOTATION</scope>
    <source>
        <strain>ATCC BAA-793 / NCIMB 8826 / WCFS1</strain>
    </source>
</reference>
<keyword id="KW-0028">Amino-acid biosynthesis</keyword>
<keyword id="KW-0067">ATP-binding</keyword>
<keyword id="KW-0963">Cytoplasm</keyword>
<keyword id="KW-0418">Kinase</keyword>
<keyword id="KW-0547">Nucleotide-binding</keyword>
<keyword id="KW-1185">Reference proteome</keyword>
<keyword id="KW-0791">Threonine biosynthesis</keyword>
<keyword id="KW-0808">Transferase</keyword>
<accession>Q88Z08</accession>
<accession>F9UL43</accession>
<evidence type="ECO:0000255" key="1">
    <source>
        <dbReference type="HAMAP-Rule" id="MF_00384"/>
    </source>
</evidence>
<protein>
    <recommendedName>
        <fullName evidence="1">Homoserine kinase</fullName>
        <shortName evidence="1">HK</shortName>
        <shortName evidence="1">HSK</shortName>
        <ecNumber evidence="1">2.7.1.39</ecNumber>
    </recommendedName>
</protein>
<organism>
    <name type="scientific">Lactiplantibacillus plantarum (strain ATCC BAA-793 / NCIMB 8826 / WCFS1)</name>
    <name type="common">Lactobacillus plantarum</name>
    <dbReference type="NCBI Taxonomy" id="220668"/>
    <lineage>
        <taxon>Bacteria</taxon>
        <taxon>Bacillati</taxon>
        <taxon>Bacillota</taxon>
        <taxon>Bacilli</taxon>
        <taxon>Lactobacillales</taxon>
        <taxon>Lactobacillaceae</taxon>
        <taxon>Lactiplantibacillus</taxon>
    </lineage>
</organism>
<sequence length="291" mass="30701">MLTISVPATSANLGPGFDSIGLALDMQLTLQVLQPSDHWQIDHPFGADVPTDERNLIIKTALHLVPDLQPQHLQMASKIPLARGLGSSSTAIVAGLVLANELTGATRSSAELLEVATQLEGHPDNVAPALLGGLVVATNTDGRVRAVKLPLPMLFASVYVPNEPLLTTASRQALPTELAYHQAVTGSSVANTLVAALATQNWDVALPLLEQDQFHEQYRAKLVPALQTVRDHAHALGLTGTYLSGAGPTVITLGDYGQLATLQAQLSQDTTLTGQLFLLPMDATGVKVQKS</sequence>